<gene>
    <name evidence="1" type="primary">guaA</name>
    <name type="ordered locus">NT01CX_0459</name>
</gene>
<feature type="chain" id="PRO_1000120264" description="GMP synthase [glutamine-hydrolyzing]">
    <location>
        <begin position="1"/>
        <end position="512"/>
    </location>
</feature>
<feature type="domain" description="Glutamine amidotransferase type-1" evidence="1">
    <location>
        <begin position="7"/>
        <end position="197"/>
    </location>
</feature>
<feature type="domain" description="GMPS ATP-PPase" evidence="1">
    <location>
        <begin position="198"/>
        <end position="387"/>
    </location>
</feature>
<feature type="active site" description="Nucleophile" evidence="1">
    <location>
        <position position="84"/>
    </location>
</feature>
<feature type="active site" evidence="1">
    <location>
        <position position="171"/>
    </location>
</feature>
<feature type="active site" evidence="1">
    <location>
        <position position="173"/>
    </location>
</feature>
<feature type="binding site" evidence="1">
    <location>
        <begin position="225"/>
        <end position="231"/>
    </location>
    <ligand>
        <name>ATP</name>
        <dbReference type="ChEBI" id="CHEBI:30616"/>
    </ligand>
</feature>
<comment type="function">
    <text evidence="1">Catalyzes the synthesis of GMP from XMP.</text>
</comment>
<comment type="catalytic activity">
    <reaction evidence="1">
        <text>XMP + L-glutamine + ATP + H2O = GMP + L-glutamate + AMP + diphosphate + 2 H(+)</text>
        <dbReference type="Rhea" id="RHEA:11680"/>
        <dbReference type="ChEBI" id="CHEBI:15377"/>
        <dbReference type="ChEBI" id="CHEBI:15378"/>
        <dbReference type="ChEBI" id="CHEBI:29985"/>
        <dbReference type="ChEBI" id="CHEBI:30616"/>
        <dbReference type="ChEBI" id="CHEBI:33019"/>
        <dbReference type="ChEBI" id="CHEBI:57464"/>
        <dbReference type="ChEBI" id="CHEBI:58115"/>
        <dbReference type="ChEBI" id="CHEBI:58359"/>
        <dbReference type="ChEBI" id="CHEBI:456215"/>
        <dbReference type="EC" id="6.3.5.2"/>
    </reaction>
</comment>
<comment type="pathway">
    <text evidence="1">Purine metabolism; GMP biosynthesis; GMP from XMP (L-Gln route): step 1/1.</text>
</comment>
<comment type="subunit">
    <text evidence="1">Homodimer.</text>
</comment>
<proteinExistence type="inferred from homology"/>
<name>GUAA_CLONN</name>
<protein>
    <recommendedName>
        <fullName evidence="1">GMP synthase [glutamine-hydrolyzing]</fullName>
        <ecNumber evidence="1">6.3.5.2</ecNumber>
    </recommendedName>
    <alternativeName>
        <fullName evidence="1">GMP synthetase</fullName>
    </alternativeName>
    <alternativeName>
        <fullName evidence="1">Glutamine amidotransferase</fullName>
    </alternativeName>
</protein>
<evidence type="ECO:0000255" key="1">
    <source>
        <dbReference type="HAMAP-Rule" id="MF_00344"/>
    </source>
</evidence>
<accession>A0Q2S8</accession>
<sequence>MAIERELVLVVDFGGQYNQLIARRVREHNVYCEIIPYTTSVEDIKKKNPKAIIFTGGPNSVYGEGTPRVEKEIFELGVPVLGICYGHQLTAYTLGGKVESPDIREYGKTEVKIDNKSPLFDGIKEADQSWMSHTDYVSEIPEGFKIIATTDQCPVAAMANEEKKIYGVQFHPEVEHTLFGQKMLGNFLFKVAGLKADWSMASFAEEKIKAIKELVGDKKVLCALSGGVDSSVAAVLVHKAIGKQLTCVFVDHGLLRKDEGDQVEAIFKKQFDMNLIRVNAGERFLGKLKGVSDPETKRKIIGEEFIRVFEEEAGKLGQIDFLVQGTIYPDVVESGTNTSATIKSHHNVGGLPEDMQFSLIEPLRELFKDEVRAVGEELGIPHKLVWRQPFPGPGLAIRVLGEITEEKLEITREADAIFREEIALAGLEEKIWQYFACLPNIQSVGVMGDERTYCHTIALRAVTSSDAMTSDWARIPYEVLDKVSRRIVNEVKGVNRIVYDVTSKPPATIEWE</sequence>
<keyword id="KW-0067">ATP-binding</keyword>
<keyword id="KW-0315">Glutamine amidotransferase</keyword>
<keyword id="KW-0332">GMP biosynthesis</keyword>
<keyword id="KW-0436">Ligase</keyword>
<keyword id="KW-0547">Nucleotide-binding</keyword>
<keyword id="KW-0658">Purine biosynthesis</keyword>
<keyword id="KW-1185">Reference proteome</keyword>
<dbReference type="EC" id="6.3.5.2" evidence="1"/>
<dbReference type="EMBL" id="CP000382">
    <property type="protein sequence ID" value="ABK61277.1"/>
    <property type="molecule type" value="Genomic_DNA"/>
</dbReference>
<dbReference type="SMR" id="A0Q2S8"/>
<dbReference type="STRING" id="386415.NT01CX_0459"/>
<dbReference type="MEROPS" id="C26.957"/>
<dbReference type="KEGG" id="cno:NT01CX_0459"/>
<dbReference type="eggNOG" id="COG0519">
    <property type="taxonomic scope" value="Bacteria"/>
</dbReference>
<dbReference type="HOGENOM" id="CLU_014340_0_5_9"/>
<dbReference type="UniPathway" id="UPA00189">
    <property type="reaction ID" value="UER00296"/>
</dbReference>
<dbReference type="Proteomes" id="UP000008220">
    <property type="component" value="Chromosome"/>
</dbReference>
<dbReference type="GO" id="GO:0005829">
    <property type="term" value="C:cytosol"/>
    <property type="evidence" value="ECO:0007669"/>
    <property type="project" value="TreeGrafter"/>
</dbReference>
<dbReference type="GO" id="GO:0005524">
    <property type="term" value="F:ATP binding"/>
    <property type="evidence" value="ECO:0007669"/>
    <property type="project" value="UniProtKB-UniRule"/>
</dbReference>
<dbReference type="GO" id="GO:0003921">
    <property type="term" value="F:GMP synthase activity"/>
    <property type="evidence" value="ECO:0007669"/>
    <property type="project" value="InterPro"/>
</dbReference>
<dbReference type="CDD" id="cd01742">
    <property type="entry name" value="GATase1_GMP_Synthase"/>
    <property type="match status" value="1"/>
</dbReference>
<dbReference type="CDD" id="cd01997">
    <property type="entry name" value="GMP_synthase_C"/>
    <property type="match status" value="1"/>
</dbReference>
<dbReference type="FunFam" id="3.30.300.10:FF:000002">
    <property type="entry name" value="GMP synthase [glutamine-hydrolyzing]"/>
    <property type="match status" value="1"/>
</dbReference>
<dbReference type="FunFam" id="3.40.50.620:FF:000001">
    <property type="entry name" value="GMP synthase [glutamine-hydrolyzing]"/>
    <property type="match status" value="1"/>
</dbReference>
<dbReference type="FunFam" id="3.40.50.880:FF:000001">
    <property type="entry name" value="GMP synthase [glutamine-hydrolyzing]"/>
    <property type="match status" value="1"/>
</dbReference>
<dbReference type="Gene3D" id="3.30.300.10">
    <property type="match status" value="1"/>
</dbReference>
<dbReference type="Gene3D" id="3.40.50.880">
    <property type="match status" value="1"/>
</dbReference>
<dbReference type="Gene3D" id="3.40.50.620">
    <property type="entry name" value="HUPs"/>
    <property type="match status" value="1"/>
</dbReference>
<dbReference type="HAMAP" id="MF_00344">
    <property type="entry name" value="GMP_synthase"/>
    <property type="match status" value="1"/>
</dbReference>
<dbReference type="InterPro" id="IPR029062">
    <property type="entry name" value="Class_I_gatase-like"/>
</dbReference>
<dbReference type="InterPro" id="IPR017926">
    <property type="entry name" value="GATASE"/>
</dbReference>
<dbReference type="InterPro" id="IPR001674">
    <property type="entry name" value="GMP_synth_C"/>
</dbReference>
<dbReference type="InterPro" id="IPR004739">
    <property type="entry name" value="GMP_synth_GATase"/>
</dbReference>
<dbReference type="InterPro" id="IPR022955">
    <property type="entry name" value="GMP_synthase"/>
</dbReference>
<dbReference type="InterPro" id="IPR025777">
    <property type="entry name" value="GMPS_ATP_PPase_dom"/>
</dbReference>
<dbReference type="InterPro" id="IPR014729">
    <property type="entry name" value="Rossmann-like_a/b/a_fold"/>
</dbReference>
<dbReference type="NCBIfam" id="TIGR00884">
    <property type="entry name" value="guaA_Cterm"/>
    <property type="match status" value="1"/>
</dbReference>
<dbReference type="NCBIfam" id="TIGR00888">
    <property type="entry name" value="guaA_Nterm"/>
    <property type="match status" value="1"/>
</dbReference>
<dbReference type="NCBIfam" id="NF000848">
    <property type="entry name" value="PRK00074.1"/>
    <property type="match status" value="1"/>
</dbReference>
<dbReference type="PANTHER" id="PTHR11922:SF2">
    <property type="entry name" value="GMP SYNTHASE [GLUTAMINE-HYDROLYZING]"/>
    <property type="match status" value="1"/>
</dbReference>
<dbReference type="PANTHER" id="PTHR11922">
    <property type="entry name" value="GMP SYNTHASE-RELATED"/>
    <property type="match status" value="1"/>
</dbReference>
<dbReference type="Pfam" id="PF00117">
    <property type="entry name" value="GATase"/>
    <property type="match status" value="1"/>
</dbReference>
<dbReference type="Pfam" id="PF00958">
    <property type="entry name" value="GMP_synt_C"/>
    <property type="match status" value="1"/>
</dbReference>
<dbReference type="Pfam" id="PF03054">
    <property type="entry name" value="tRNA_Me_trans"/>
    <property type="match status" value="1"/>
</dbReference>
<dbReference type="PRINTS" id="PR00099">
    <property type="entry name" value="CPSGATASE"/>
</dbReference>
<dbReference type="PRINTS" id="PR00096">
    <property type="entry name" value="GATASE"/>
</dbReference>
<dbReference type="SUPFAM" id="SSF52402">
    <property type="entry name" value="Adenine nucleotide alpha hydrolases-like"/>
    <property type="match status" value="1"/>
</dbReference>
<dbReference type="SUPFAM" id="SSF52317">
    <property type="entry name" value="Class I glutamine amidotransferase-like"/>
    <property type="match status" value="1"/>
</dbReference>
<dbReference type="SUPFAM" id="SSF54810">
    <property type="entry name" value="GMP synthetase C-terminal dimerisation domain"/>
    <property type="match status" value="1"/>
</dbReference>
<dbReference type="PROSITE" id="PS51273">
    <property type="entry name" value="GATASE_TYPE_1"/>
    <property type="match status" value="1"/>
</dbReference>
<dbReference type="PROSITE" id="PS51553">
    <property type="entry name" value="GMPS_ATP_PPASE"/>
    <property type="match status" value="1"/>
</dbReference>
<reference key="1">
    <citation type="journal article" date="2006" name="Nat. Biotechnol.">
        <title>The genome and transcriptomes of the anti-tumor agent Clostridium novyi-NT.</title>
        <authorList>
            <person name="Bettegowda C."/>
            <person name="Huang X."/>
            <person name="Lin J."/>
            <person name="Cheong I."/>
            <person name="Kohli M."/>
            <person name="Szabo S.A."/>
            <person name="Zhang X."/>
            <person name="Diaz L.A. Jr."/>
            <person name="Velculescu V.E."/>
            <person name="Parmigiani G."/>
            <person name="Kinzler K.W."/>
            <person name="Vogelstein B."/>
            <person name="Zhou S."/>
        </authorList>
    </citation>
    <scope>NUCLEOTIDE SEQUENCE [LARGE SCALE GENOMIC DNA]</scope>
    <source>
        <strain>NT</strain>
    </source>
</reference>
<organism>
    <name type="scientific">Clostridium novyi (strain NT)</name>
    <dbReference type="NCBI Taxonomy" id="386415"/>
    <lineage>
        <taxon>Bacteria</taxon>
        <taxon>Bacillati</taxon>
        <taxon>Bacillota</taxon>
        <taxon>Clostridia</taxon>
        <taxon>Eubacteriales</taxon>
        <taxon>Clostridiaceae</taxon>
        <taxon>Clostridium</taxon>
    </lineage>
</organism>